<protein>
    <recommendedName>
        <fullName>Homeobox protein Hox-D8</fullName>
    </recommendedName>
    <alternativeName>
        <fullName>Homeobox protein Hox-4E</fullName>
    </alternativeName>
    <alternativeName>
        <fullName>Homeobox protein Hox-5.4</fullName>
    </alternativeName>
</protein>
<organism>
    <name type="scientific">Homo sapiens</name>
    <name type="common">Human</name>
    <dbReference type="NCBI Taxonomy" id="9606"/>
    <lineage>
        <taxon>Eukaryota</taxon>
        <taxon>Metazoa</taxon>
        <taxon>Chordata</taxon>
        <taxon>Craniata</taxon>
        <taxon>Vertebrata</taxon>
        <taxon>Euteleostomi</taxon>
        <taxon>Mammalia</taxon>
        <taxon>Eutheria</taxon>
        <taxon>Euarchontoglires</taxon>
        <taxon>Primates</taxon>
        <taxon>Haplorrhini</taxon>
        <taxon>Catarrhini</taxon>
        <taxon>Hominidae</taxon>
        <taxon>Homo</taxon>
    </lineage>
</organism>
<accession>P13378</accession>
<accession>F8WBG7</accession>
<accession>Q5BL00</accession>
<accession>Q8IXZ1</accession>
<reference key="1">
    <citation type="journal article" date="2002" name="Teratology">
        <title>Complete mutation analysis panel of the 39 human HOX genes.</title>
        <authorList>
            <person name="Kosaki K."/>
            <person name="Kosaki R."/>
            <person name="Suzuki T."/>
            <person name="Yoshihashi H."/>
            <person name="Takahashi T."/>
            <person name="Sasaki K."/>
            <person name="Tomita M."/>
            <person name="McGinnis W."/>
            <person name="Matsuo N."/>
        </authorList>
    </citation>
    <scope>NUCLEOTIDE SEQUENCE [GENOMIC DNA]</scope>
</reference>
<reference key="2">
    <citation type="submission" date="2003-04" db="EMBL/GenBank/DDBJ databases">
        <title>Full-length cDNA libraries and normalization.</title>
        <authorList>
            <person name="Li W.B."/>
            <person name="Gruber C."/>
            <person name="Jessee J."/>
            <person name="Polayes D."/>
        </authorList>
    </citation>
    <scope>NUCLEOTIDE SEQUENCE [LARGE SCALE MRNA] (ISOFORM 3)</scope>
    <source>
        <tissue>Neuroblastoma</tissue>
    </source>
</reference>
<reference key="3">
    <citation type="journal article" date="2005" name="Nature">
        <title>Generation and annotation of the DNA sequences of human chromosomes 2 and 4.</title>
        <authorList>
            <person name="Hillier L.W."/>
            <person name="Graves T.A."/>
            <person name="Fulton R.S."/>
            <person name="Fulton L.A."/>
            <person name="Pepin K.H."/>
            <person name="Minx P."/>
            <person name="Wagner-McPherson C."/>
            <person name="Layman D."/>
            <person name="Wylie K."/>
            <person name="Sekhon M."/>
            <person name="Becker M.C."/>
            <person name="Fewell G.A."/>
            <person name="Delehaunty K.D."/>
            <person name="Miner T.L."/>
            <person name="Nash W.E."/>
            <person name="Kremitzki C."/>
            <person name="Oddy L."/>
            <person name="Du H."/>
            <person name="Sun H."/>
            <person name="Bradshaw-Cordum H."/>
            <person name="Ali J."/>
            <person name="Carter J."/>
            <person name="Cordes M."/>
            <person name="Harris A."/>
            <person name="Isak A."/>
            <person name="van Brunt A."/>
            <person name="Nguyen C."/>
            <person name="Du F."/>
            <person name="Courtney L."/>
            <person name="Kalicki J."/>
            <person name="Ozersky P."/>
            <person name="Abbott S."/>
            <person name="Armstrong J."/>
            <person name="Belter E.A."/>
            <person name="Caruso L."/>
            <person name="Cedroni M."/>
            <person name="Cotton M."/>
            <person name="Davidson T."/>
            <person name="Desai A."/>
            <person name="Elliott G."/>
            <person name="Erb T."/>
            <person name="Fronick C."/>
            <person name="Gaige T."/>
            <person name="Haakenson W."/>
            <person name="Haglund K."/>
            <person name="Holmes A."/>
            <person name="Harkins R."/>
            <person name="Kim K."/>
            <person name="Kruchowski S.S."/>
            <person name="Strong C.M."/>
            <person name="Grewal N."/>
            <person name="Goyea E."/>
            <person name="Hou S."/>
            <person name="Levy A."/>
            <person name="Martinka S."/>
            <person name="Mead K."/>
            <person name="McLellan M.D."/>
            <person name="Meyer R."/>
            <person name="Randall-Maher J."/>
            <person name="Tomlinson C."/>
            <person name="Dauphin-Kohlberg S."/>
            <person name="Kozlowicz-Reilly A."/>
            <person name="Shah N."/>
            <person name="Swearengen-Shahid S."/>
            <person name="Snider J."/>
            <person name="Strong J.T."/>
            <person name="Thompson J."/>
            <person name="Yoakum M."/>
            <person name="Leonard S."/>
            <person name="Pearman C."/>
            <person name="Trani L."/>
            <person name="Radionenko M."/>
            <person name="Waligorski J.E."/>
            <person name="Wang C."/>
            <person name="Rock S.M."/>
            <person name="Tin-Wollam A.-M."/>
            <person name="Maupin R."/>
            <person name="Latreille P."/>
            <person name="Wendl M.C."/>
            <person name="Yang S.-P."/>
            <person name="Pohl C."/>
            <person name="Wallis J.W."/>
            <person name="Spieth J."/>
            <person name="Bieri T.A."/>
            <person name="Berkowicz N."/>
            <person name="Nelson J.O."/>
            <person name="Osborne J."/>
            <person name="Ding L."/>
            <person name="Meyer R."/>
            <person name="Sabo A."/>
            <person name="Shotland Y."/>
            <person name="Sinha P."/>
            <person name="Wohldmann P.E."/>
            <person name="Cook L.L."/>
            <person name="Hickenbotham M.T."/>
            <person name="Eldred J."/>
            <person name="Williams D."/>
            <person name="Jones T.A."/>
            <person name="She X."/>
            <person name="Ciccarelli F.D."/>
            <person name="Izaurralde E."/>
            <person name="Taylor J."/>
            <person name="Schmutz J."/>
            <person name="Myers R.M."/>
            <person name="Cox D.R."/>
            <person name="Huang X."/>
            <person name="McPherson J.D."/>
            <person name="Mardis E.R."/>
            <person name="Clifton S.W."/>
            <person name="Warren W.C."/>
            <person name="Chinwalla A.T."/>
            <person name="Eddy S.R."/>
            <person name="Marra M.A."/>
            <person name="Ovcharenko I."/>
            <person name="Furey T.S."/>
            <person name="Miller W."/>
            <person name="Eichler E.E."/>
            <person name="Bork P."/>
            <person name="Suyama M."/>
            <person name="Torrents D."/>
            <person name="Waterston R.H."/>
            <person name="Wilson R.K."/>
        </authorList>
    </citation>
    <scope>NUCLEOTIDE SEQUENCE [LARGE SCALE GENOMIC DNA]</scope>
</reference>
<reference key="4">
    <citation type="journal article" date="2004" name="Genome Res.">
        <title>The status, quality, and expansion of the NIH full-length cDNA project: the Mammalian Gene Collection (MGC).</title>
        <authorList>
            <consortium name="The MGC Project Team"/>
        </authorList>
    </citation>
    <scope>NUCLEOTIDE SEQUENCE [LARGE SCALE MRNA] (ISOFORM 2)</scope>
    <source>
        <tissue>Kidney</tissue>
        <tissue>PNS</tissue>
    </source>
</reference>
<reference key="5">
    <citation type="journal article" date="1989" name="Genes Dev.">
        <title>Complementary homeo protein gradients in developing limb buds.</title>
        <authorList>
            <person name="Oliver G."/>
            <person name="Sidell N."/>
            <person name="Fiske N."/>
            <person name="Heinzmann C."/>
            <person name="Mohandas T."/>
            <person name="Sparkes R.S."/>
            <person name="De Robertis E.M."/>
        </authorList>
    </citation>
    <scope>NUCLEOTIDE SEQUENCE [GENOMIC DNA] OF 193-287</scope>
</reference>
<evidence type="ECO:0000255" key="1">
    <source>
        <dbReference type="PROSITE-ProRule" id="PRU00108"/>
    </source>
</evidence>
<evidence type="ECO:0000256" key="2">
    <source>
        <dbReference type="SAM" id="MobiDB-lite"/>
    </source>
</evidence>
<evidence type="ECO:0000303" key="3">
    <source>
    </source>
</evidence>
<evidence type="ECO:0000303" key="4">
    <source ref="2"/>
</evidence>
<evidence type="ECO:0000305" key="5"/>
<name>HXD8_HUMAN</name>
<gene>
    <name type="primary">HOXD8</name>
    <name type="synonym">HOX4E</name>
</gene>
<keyword id="KW-0025">Alternative splicing</keyword>
<keyword id="KW-0217">Developmental protein</keyword>
<keyword id="KW-0238">DNA-binding</keyword>
<keyword id="KW-0371">Homeobox</keyword>
<keyword id="KW-0539">Nucleus</keyword>
<keyword id="KW-1267">Proteomics identification</keyword>
<keyword id="KW-1185">Reference proteome</keyword>
<keyword id="KW-0804">Transcription</keyword>
<keyword id="KW-0805">Transcription regulation</keyword>
<feature type="chain" id="PRO_0000200216" description="Homeobox protein Hox-D8">
    <location>
        <begin position="1"/>
        <end position="290"/>
    </location>
</feature>
<feature type="DNA-binding region" description="Homeobox" evidence="1">
    <location>
        <begin position="197"/>
        <end position="256"/>
    </location>
</feature>
<feature type="region of interest" description="Disordered" evidence="2">
    <location>
        <begin position="60"/>
        <end position="127"/>
    </location>
</feature>
<feature type="region of interest" description="Disordered" evidence="2">
    <location>
        <begin position="161"/>
        <end position="200"/>
    </location>
</feature>
<feature type="region of interest" description="Disordered" evidence="2">
    <location>
        <begin position="255"/>
        <end position="290"/>
    </location>
</feature>
<feature type="compositionally biased region" description="Low complexity" evidence="2">
    <location>
        <begin position="60"/>
        <end position="69"/>
    </location>
</feature>
<feature type="compositionally biased region" description="Pro residues" evidence="2">
    <location>
        <begin position="108"/>
        <end position="124"/>
    </location>
</feature>
<feature type="compositionally biased region" description="Basic and acidic residues" evidence="2">
    <location>
        <begin position="255"/>
        <end position="278"/>
    </location>
</feature>
<feature type="splice variant" id="VSP_045862" description="In isoform 3." evidence="4">
    <location>
        <begin position="1"/>
        <end position="184"/>
    </location>
</feature>
<feature type="splice variant" id="VSP_042856" description="In isoform 2." evidence="3">
    <location>
        <position position="193"/>
    </location>
</feature>
<feature type="splice variant" id="VSP_045863" description="In isoform 3." evidence="4">
    <location>
        <begin position="252"/>
        <end position="290"/>
    </location>
</feature>
<feature type="sequence conflict" description="In Ref. 4; AAH90853." evidence="5" ref="4">
    <original>E</original>
    <variation>G</variation>
    <location>
        <position position="39"/>
    </location>
</feature>
<feature type="sequence conflict" description="In Ref. 5; CAA33529." evidence="5" ref="5">
    <original>G</original>
    <variation>A</variation>
    <location>
        <position position="287"/>
    </location>
</feature>
<proteinExistence type="evidence at protein level"/>
<comment type="function">
    <text>Sequence-specific transcription factor which is part of a developmental regulatory system that provides cells with specific positional identities on the anterior-posterior axis.</text>
</comment>
<comment type="interaction">
    <interactant intactId="EBI-7098661">
        <id>P13378</id>
    </interactant>
    <interactant intactId="EBI-9092016">
        <id>Q9UQB8-6</id>
        <label>BAIAP2</label>
    </interactant>
    <organismsDiffer>false</organismsDiffer>
    <experiments>3</experiments>
</comment>
<comment type="interaction">
    <interactant intactId="EBI-7098661">
        <id>P13378</id>
    </interactant>
    <interactant intactId="EBI-747813">
        <id>Q5SW96</id>
        <label>LDLRAP1</label>
    </interactant>
    <organismsDiffer>false</organismsDiffer>
    <experiments>3</experiments>
</comment>
<comment type="interaction">
    <interactant intactId="EBI-7098661">
        <id>P13378</id>
    </interactant>
    <interactant intactId="EBI-713635">
        <id>O43639</id>
        <label>NCK2</label>
    </interactant>
    <organismsDiffer>false</organismsDiffer>
    <experiments>3</experiments>
</comment>
<comment type="subcellular location">
    <subcellularLocation>
        <location>Nucleus</location>
    </subcellularLocation>
</comment>
<comment type="alternative products">
    <event type="alternative splicing"/>
    <isoform>
        <id>P13378-1</id>
        <name>1</name>
        <sequence type="displayed"/>
    </isoform>
    <isoform>
        <id>P13378-2</id>
        <name>2</name>
        <sequence type="described" ref="VSP_042856"/>
    </isoform>
    <isoform>
        <id>P13378-3</id>
        <name>3</name>
        <sequence type="described" ref="VSP_045862 VSP_045863"/>
    </isoform>
</comment>
<comment type="similarity">
    <text evidence="5">Belongs to the Antp homeobox family.</text>
</comment>
<dbReference type="EMBL" id="AY014304">
    <property type="protein sequence ID" value="AAG42152.1"/>
    <property type="molecule type" value="Genomic_DNA"/>
</dbReference>
<dbReference type="EMBL" id="AY014303">
    <property type="protein sequence ID" value="AAG42152.1"/>
    <property type="status" value="JOINED"/>
    <property type="molecule type" value="Genomic_DNA"/>
</dbReference>
<dbReference type="EMBL" id="AL520835">
    <property type="status" value="NOT_ANNOTATED_CDS"/>
    <property type="molecule type" value="mRNA"/>
</dbReference>
<dbReference type="EMBL" id="AC009336">
    <property type="status" value="NOT_ANNOTATED_CDS"/>
    <property type="molecule type" value="Genomic_DNA"/>
</dbReference>
<dbReference type="EMBL" id="BC038709">
    <property type="protein sequence ID" value="AAH38709.1"/>
    <property type="molecule type" value="mRNA"/>
</dbReference>
<dbReference type="EMBL" id="BC090853">
    <property type="protein sequence ID" value="AAH90853.1"/>
    <property type="molecule type" value="mRNA"/>
</dbReference>
<dbReference type="EMBL" id="X15507">
    <property type="protein sequence ID" value="CAA33529.1"/>
    <property type="molecule type" value="Genomic_DNA"/>
</dbReference>
<dbReference type="CCDS" id="CCDS2268.1">
    <molecule id="P13378-1"/>
</dbReference>
<dbReference type="CCDS" id="CCDS56148.1">
    <molecule id="P13378-2"/>
</dbReference>
<dbReference type="PIR" id="B32830">
    <property type="entry name" value="B32830"/>
</dbReference>
<dbReference type="RefSeq" id="NP_001186675.1">
    <molecule id="P13378-2"/>
    <property type="nucleotide sequence ID" value="NM_001199746.2"/>
</dbReference>
<dbReference type="RefSeq" id="NP_062458.1">
    <molecule id="P13378-1"/>
    <property type="nucleotide sequence ID" value="NM_019558.4"/>
</dbReference>
<dbReference type="SMR" id="P13378"/>
<dbReference type="BioGRID" id="109474">
    <property type="interactions" value="11"/>
</dbReference>
<dbReference type="FunCoup" id="P13378">
    <property type="interactions" value="1135"/>
</dbReference>
<dbReference type="IntAct" id="P13378">
    <property type="interactions" value="8"/>
</dbReference>
<dbReference type="MINT" id="P13378"/>
<dbReference type="STRING" id="9606.ENSP00000315949"/>
<dbReference type="GlyGen" id="P13378">
    <property type="glycosylation" value="1 site, 1 O-linked glycan (1 site)"/>
</dbReference>
<dbReference type="iPTMnet" id="P13378"/>
<dbReference type="PhosphoSitePlus" id="P13378"/>
<dbReference type="BioMuta" id="HOXD8"/>
<dbReference type="DMDM" id="13124737"/>
<dbReference type="jPOST" id="P13378"/>
<dbReference type="MassIVE" id="P13378"/>
<dbReference type="PaxDb" id="9606-ENSP00000315949"/>
<dbReference type="PeptideAtlas" id="P13378"/>
<dbReference type="ProteomicsDB" id="30803"/>
<dbReference type="ProteomicsDB" id="52907">
    <molecule id="P13378-1"/>
</dbReference>
<dbReference type="ProteomicsDB" id="52908">
    <molecule id="P13378-2"/>
</dbReference>
<dbReference type="Pumba" id="P13378"/>
<dbReference type="Antibodypedia" id="33911">
    <property type="antibodies" value="295 antibodies from 30 providers"/>
</dbReference>
<dbReference type="DNASU" id="3234"/>
<dbReference type="Ensembl" id="ENST00000313173.6">
    <molecule id="P13378-1"/>
    <property type="protein sequence ID" value="ENSP00000315949.4"/>
    <property type="gene ID" value="ENSG00000175879.9"/>
</dbReference>
<dbReference type="Ensembl" id="ENST00000450510.2">
    <molecule id="P13378-2"/>
    <property type="protein sequence ID" value="ENSP00000409026.2"/>
    <property type="gene ID" value="ENSG00000175879.9"/>
</dbReference>
<dbReference type="GeneID" id="3234"/>
<dbReference type="KEGG" id="hsa:3234"/>
<dbReference type="MANE-Select" id="ENST00000313173.6">
    <property type="protein sequence ID" value="ENSP00000315949.4"/>
    <property type="RefSeq nucleotide sequence ID" value="NM_019558.4"/>
    <property type="RefSeq protein sequence ID" value="NP_062458.1"/>
</dbReference>
<dbReference type="UCSC" id="uc002uko.4">
    <molecule id="P13378-1"/>
    <property type="organism name" value="human"/>
</dbReference>
<dbReference type="AGR" id="HGNC:5139"/>
<dbReference type="CTD" id="3234"/>
<dbReference type="DisGeNET" id="3234"/>
<dbReference type="GeneCards" id="HOXD8"/>
<dbReference type="HGNC" id="HGNC:5139">
    <property type="gene designation" value="HOXD8"/>
</dbReference>
<dbReference type="HPA" id="ENSG00000175879">
    <property type="expression patterns" value="Tissue enhanced (epididymis, kidney)"/>
</dbReference>
<dbReference type="MIM" id="142985">
    <property type="type" value="gene"/>
</dbReference>
<dbReference type="neXtProt" id="NX_P13378"/>
<dbReference type="OpenTargets" id="ENSG00000175879"/>
<dbReference type="PharmGKB" id="PA29413"/>
<dbReference type="VEuPathDB" id="HostDB:ENSG00000175879"/>
<dbReference type="eggNOG" id="KOG0489">
    <property type="taxonomic scope" value="Eukaryota"/>
</dbReference>
<dbReference type="GeneTree" id="ENSGT00940000161653"/>
<dbReference type="InParanoid" id="P13378"/>
<dbReference type="OMA" id="CHREPAK"/>
<dbReference type="OrthoDB" id="6159439at2759"/>
<dbReference type="PAN-GO" id="P13378">
    <property type="GO annotations" value="4 GO annotations based on evolutionary models"/>
</dbReference>
<dbReference type="PhylomeDB" id="P13378"/>
<dbReference type="TreeFam" id="TF316310"/>
<dbReference type="PathwayCommons" id="P13378"/>
<dbReference type="SignaLink" id="P13378"/>
<dbReference type="BioGRID-ORCS" id="3234">
    <property type="hits" value="11 hits in 1172 CRISPR screens"/>
</dbReference>
<dbReference type="GeneWiki" id="HOXD8"/>
<dbReference type="GenomeRNAi" id="3234"/>
<dbReference type="Pharos" id="P13378">
    <property type="development level" value="Tbio"/>
</dbReference>
<dbReference type="PRO" id="PR:P13378"/>
<dbReference type="Proteomes" id="UP000005640">
    <property type="component" value="Chromosome 2"/>
</dbReference>
<dbReference type="RNAct" id="P13378">
    <property type="molecule type" value="protein"/>
</dbReference>
<dbReference type="Bgee" id="ENSG00000175879">
    <property type="expression patterns" value="Expressed in germinal epithelium of ovary and 122 other cell types or tissues"/>
</dbReference>
<dbReference type="ExpressionAtlas" id="P13378">
    <property type="expression patterns" value="baseline and differential"/>
</dbReference>
<dbReference type="GO" id="GO:0000785">
    <property type="term" value="C:chromatin"/>
    <property type="evidence" value="ECO:0000247"/>
    <property type="project" value="NTNU_SB"/>
</dbReference>
<dbReference type="GO" id="GO:0005634">
    <property type="term" value="C:nucleus"/>
    <property type="evidence" value="ECO:0000318"/>
    <property type="project" value="GO_Central"/>
</dbReference>
<dbReference type="GO" id="GO:0001228">
    <property type="term" value="F:DNA-binding transcription activator activity, RNA polymerase II-specific"/>
    <property type="evidence" value="ECO:0000314"/>
    <property type="project" value="NTNU_SB"/>
</dbReference>
<dbReference type="GO" id="GO:0000981">
    <property type="term" value="F:DNA-binding transcription factor activity, RNA polymerase II-specific"/>
    <property type="evidence" value="ECO:0000247"/>
    <property type="project" value="NTNU_SB"/>
</dbReference>
<dbReference type="GO" id="GO:0000977">
    <property type="term" value="F:RNA polymerase II transcription regulatory region sequence-specific DNA binding"/>
    <property type="evidence" value="ECO:0000314"/>
    <property type="project" value="NTNU_SB"/>
</dbReference>
<dbReference type="GO" id="GO:1990837">
    <property type="term" value="F:sequence-specific double-stranded DNA binding"/>
    <property type="evidence" value="ECO:0000314"/>
    <property type="project" value="ARUK-UCL"/>
</dbReference>
<dbReference type="GO" id="GO:0008595">
    <property type="term" value="P:anterior/posterior axis specification, embryo"/>
    <property type="evidence" value="ECO:0000303"/>
    <property type="project" value="UniProtKB"/>
</dbReference>
<dbReference type="GO" id="GO:0000122">
    <property type="term" value="P:negative regulation of transcription by RNA polymerase II"/>
    <property type="evidence" value="ECO:0007669"/>
    <property type="project" value="Ensembl"/>
</dbReference>
<dbReference type="GO" id="GO:0045944">
    <property type="term" value="P:positive regulation of transcription by RNA polymerase II"/>
    <property type="evidence" value="ECO:0000314"/>
    <property type="project" value="NTNU_SB"/>
</dbReference>
<dbReference type="GO" id="GO:0006357">
    <property type="term" value="P:regulation of transcription by RNA polymerase II"/>
    <property type="evidence" value="ECO:0000318"/>
    <property type="project" value="GO_Central"/>
</dbReference>
<dbReference type="GO" id="GO:0048705">
    <property type="term" value="P:skeletal system morphogenesis"/>
    <property type="evidence" value="ECO:0007669"/>
    <property type="project" value="Ensembl"/>
</dbReference>
<dbReference type="CDD" id="cd00086">
    <property type="entry name" value="homeodomain"/>
    <property type="match status" value="1"/>
</dbReference>
<dbReference type="FunFam" id="1.10.10.60:FF:000072">
    <property type="entry name" value="Homeobox protein Hox-B8"/>
    <property type="match status" value="1"/>
</dbReference>
<dbReference type="Gene3D" id="1.10.10.60">
    <property type="entry name" value="Homeodomain-like"/>
    <property type="match status" value="1"/>
</dbReference>
<dbReference type="InterPro" id="IPR050948">
    <property type="entry name" value="Antp_homeobox_TF"/>
</dbReference>
<dbReference type="InterPro" id="IPR001356">
    <property type="entry name" value="HD"/>
</dbReference>
<dbReference type="InterPro" id="IPR020479">
    <property type="entry name" value="HD_metazoa"/>
</dbReference>
<dbReference type="InterPro" id="IPR001827">
    <property type="entry name" value="Homeobox_Antennapedia_CS"/>
</dbReference>
<dbReference type="InterPro" id="IPR017970">
    <property type="entry name" value="Homeobox_CS"/>
</dbReference>
<dbReference type="InterPro" id="IPR009057">
    <property type="entry name" value="Homeodomain-like_sf"/>
</dbReference>
<dbReference type="PANTHER" id="PTHR46166">
    <property type="entry name" value="HOMEOBOX DOMAIN-CONTAINING PROTEIN"/>
    <property type="match status" value="1"/>
</dbReference>
<dbReference type="PANTHER" id="PTHR46166:SF1">
    <property type="entry name" value="HOMEOBOX PROTEIN HOX-D8"/>
    <property type="match status" value="1"/>
</dbReference>
<dbReference type="Pfam" id="PF00046">
    <property type="entry name" value="Homeodomain"/>
    <property type="match status" value="1"/>
</dbReference>
<dbReference type="PRINTS" id="PR00024">
    <property type="entry name" value="HOMEOBOX"/>
</dbReference>
<dbReference type="SMART" id="SM00389">
    <property type="entry name" value="HOX"/>
    <property type="match status" value="1"/>
</dbReference>
<dbReference type="SUPFAM" id="SSF46689">
    <property type="entry name" value="Homeodomain-like"/>
    <property type="match status" value="1"/>
</dbReference>
<dbReference type="PROSITE" id="PS00032">
    <property type="entry name" value="ANTENNAPEDIA"/>
    <property type="match status" value="1"/>
</dbReference>
<dbReference type="PROSITE" id="PS00027">
    <property type="entry name" value="HOMEOBOX_1"/>
    <property type="match status" value="1"/>
</dbReference>
<dbReference type="PROSITE" id="PS50071">
    <property type="entry name" value="HOMEOBOX_2"/>
    <property type="match status" value="1"/>
</dbReference>
<sequence length="290" mass="31911">MSSYFVNPLYSKYKAAAAAAAAAGEAINPTYYDCHFAPEVGGRHAAAAAALQLYGNSAAGFPHAPPQAHAHPHPSPPPSGTGCGGREGRGQEYFHPGGGSPAAAYQAAPPPPPHPPPPPPPPPCGGIACHGEPAKFYGYDNLQRQPIFTTQQEAELVQYPDCKSSSGNIGEDPDHLNQSSSPSQMFPWMRPQAAPGRRRGRQTYSRFQTLELEKEFLFNPYLTRKRRIEVSHALALTERQVKIWFQNRRMKWKKENNKDKFPVSRQEVKDGETKKEAQELEEDRAEGLTN</sequence>